<reference key="1">
    <citation type="journal article" date="2006" name="Mol. Microbiol.">
        <title>Role of pathogenicity island-associated integrases in the genome plasticity of uropathogenic Escherichia coli strain 536.</title>
        <authorList>
            <person name="Hochhut B."/>
            <person name="Wilde C."/>
            <person name="Balling G."/>
            <person name="Middendorf B."/>
            <person name="Dobrindt U."/>
            <person name="Brzuszkiewicz E."/>
            <person name="Gottschalk G."/>
            <person name="Carniel E."/>
            <person name="Hacker J."/>
        </authorList>
    </citation>
    <scope>NUCLEOTIDE SEQUENCE [LARGE SCALE GENOMIC DNA]</scope>
    <source>
        <strain>536 / UPEC</strain>
    </source>
</reference>
<keyword id="KW-0071">Autoinducer synthesis</keyword>
<keyword id="KW-0408">Iron</keyword>
<keyword id="KW-0456">Lyase</keyword>
<keyword id="KW-0479">Metal-binding</keyword>
<keyword id="KW-0673">Quorum sensing</keyword>
<organism>
    <name type="scientific">Escherichia coli O6:K15:H31 (strain 536 / UPEC)</name>
    <dbReference type="NCBI Taxonomy" id="362663"/>
    <lineage>
        <taxon>Bacteria</taxon>
        <taxon>Pseudomonadati</taxon>
        <taxon>Pseudomonadota</taxon>
        <taxon>Gammaproteobacteria</taxon>
        <taxon>Enterobacterales</taxon>
        <taxon>Enterobacteriaceae</taxon>
        <taxon>Escherichia</taxon>
    </lineage>
</organism>
<accession>Q0TEI8</accession>
<name>LUXS_ECOL5</name>
<evidence type="ECO:0000255" key="1">
    <source>
        <dbReference type="HAMAP-Rule" id="MF_00091"/>
    </source>
</evidence>
<gene>
    <name evidence="1" type="primary">luxS</name>
    <name type="ordered locus">ECP_2652</name>
</gene>
<comment type="function">
    <text evidence="1">Involved in the synthesis of autoinducer 2 (AI-2) which is secreted by bacteria and is used to communicate both the cell density and the metabolic potential of the environment. The regulation of gene expression in response to changes in cell density is called quorum sensing. Catalyzes the transformation of S-ribosylhomocysteine (RHC) to homocysteine (HC) and 4,5-dihydroxy-2,3-pentadione (DPD).</text>
</comment>
<comment type="catalytic activity">
    <reaction evidence="1">
        <text>S-(5-deoxy-D-ribos-5-yl)-L-homocysteine = (S)-4,5-dihydroxypentane-2,3-dione + L-homocysteine</text>
        <dbReference type="Rhea" id="RHEA:17753"/>
        <dbReference type="ChEBI" id="CHEBI:29484"/>
        <dbReference type="ChEBI" id="CHEBI:58195"/>
        <dbReference type="ChEBI" id="CHEBI:58199"/>
        <dbReference type="EC" id="4.4.1.21"/>
    </reaction>
</comment>
<comment type="cofactor">
    <cofactor evidence="1">
        <name>Fe cation</name>
        <dbReference type="ChEBI" id="CHEBI:24875"/>
    </cofactor>
    <text evidence="1">Binds 1 Fe cation per subunit.</text>
</comment>
<comment type="subunit">
    <text evidence="1">Homodimer.</text>
</comment>
<comment type="similarity">
    <text evidence="1">Belongs to the LuxS family.</text>
</comment>
<sequence length="171" mass="19443">MPLLDSFTVDHTRMEAPAVRVAKTMNTPHGDAITVFDLRFCVPNKEVMPERGIHTLEHLFAGFMRNHLNGNGVEIIDISPMGCRTGFYMSLIGTPDEQRVADAWKAAMEDVLKVQDQNQIPELNVYQCGTYQMHSLQEAQDIARNILERDVRINSNEELALPKEKLQELHI</sequence>
<protein>
    <recommendedName>
        <fullName evidence="1">S-ribosylhomocysteine lyase</fullName>
        <ecNumber evidence="1">4.4.1.21</ecNumber>
    </recommendedName>
    <alternativeName>
        <fullName evidence="1">AI-2 synthesis protein</fullName>
    </alternativeName>
    <alternativeName>
        <fullName evidence="1">Autoinducer-2 production protein LuxS</fullName>
    </alternativeName>
</protein>
<feature type="chain" id="PRO_0000297997" description="S-ribosylhomocysteine lyase">
    <location>
        <begin position="1"/>
        <end position="171"/>
    </location>
</feature>
<feature type="binding site" evidence="1">
    <location>
        <position position="54"/>
    </location>
    <ligand>
        <name>Fe cation</name>
        <dbReference type="ChEBI" id="CHEBI:24875"/>
    </ligand>
</feature>
<feature type="binding site" evidence="1">
    <location>
        <position position="58"/>
    </location>
    <ligand>
        <name>Fe cation</name>
        <dbReference type="ChEBI" id="CHEBI:24875"/>
    </ligand>
</feature>
<feature type="binding site" evidence="1">
    <location>
        <position position="128"/>
    </location>
    <ligand>
        <name>Fe cation</name>
        <dbReference type="ChEBI" id="CHEBI:24875"/>
    </ligand>
</feature>
<dbReference type="EC" id="4.4.1.21" evidence="1"/>
<dbReference type="EMBL" id="CP000247">
    <property type="protein sequence ID" value="ABG70641.1"/>
    <property type="molecule type" value="Genomic_DNA"/>
</dbReference>
<dbReference type="RefSeq" id="WP_001130208.1">
    <property type="nucleotide sequence ID" value="NC_008253.1"/>
</dbReference>
<dbReference type="SMR" id="Q0TEI8"/>
<dbReference type="KEGG" id="ecp:ECP_2652"/>
<dbReference type="HOGENOM" id="CLU_107531_2_0_6"/>
<dbReference type="Proteomes" id="UP000009182">
    <property type="component" value="Chromosome"/>
</dbReference>
<dbReference type="GO" id="GO:0005506">
    <property type="term" value="F:iron ion binding"/>
    <property type="evidence" value="ECO:0007669"/>
    <property type="project" value="InterPro"/>
</dbReference>
<dbReference type="GO" id="GO:0043768">
    <property type="term" value="F:S-ribosylhomocysteine lyase activity"/>
    <property type="evidence" value="ECO:0007669"/>
    <property type="project" value="UniProtKB-UniRule"/>
</dbReference>
<dbReference type="GO" id="GO:0009372">
    <property type="term" value="P:quorum sensing"/>
    <property type="evidence" value="ECO:0007669"/>
    <property type="project" value="UniProtKB-UniRule"/>
</dbReference>
<dbReference type="FunFam" id="3.30.1360.80:FF:000001">
    <property type="entry name" value="S-ribosylhomocysteine lyase"/>
    <property type="match status" value="1"/>
</dbReference>
<dbReference type="Gene3D" id="3.30.1360.80">
    <property type="entry name" value="S-ribosylhomocysteinase (LuxS)"/>
    <property type="match status" value="1"/>
</dbReference>
<dbReference type="HAMAP" id="MF_00091">
    <property type="entry name" value="LuxS"/>
    <property type="match status" value="1"/>
</dbReference>
<dbReference type="InterPro" id="IPR037005">
    <property type="entry name" value="LuxS_sf"/>
</dbReference>
<dbReference type="InterPro" id="IPR011249">
    <property type="entry name" value="Metalloenz_LuxS/M16"/>
</dbReference>
<dbReference type="InterPro" id="IPR003815">
    <property type="entry name" value="S-ribosylhomocysteinase"/>
</dbReference>
<dbReference type="NCBIfam" id="NF002602">
    <property type="entry name" value="PRK02260.1-2"/>
    <property type="match status" value="1"/>
</dbReference>
<dbReference type="PANTHER" id="PTHR35799">
    <property type="entry name" value="S-RIBOSYLHOMOCYSTEINE LYASE"/>
    <property type="match status" value="1"/>
</dbReference>
<dbReference type="PANTHER" id="PTHR35799:SF1">
    <property type="entry name" value="S-RIBOSYLHOMOCYSTEINE LYASE"/>
    <property type="match status" value="1"/>
</dbReference>
<dbReference type="Pfam" id="PF02664">
    <property type="entry name" value="LuxS"/>
    <property type="match status" value="1"/>
</dbReference>
<dbReference type="PIRSF" id="PIRSF006160">
    <property type="entry name" value="AI2"/>
    <property type="match status" value="1"/>
</dbReference>
<dbReference type="PRINTS" id="PR01487">
    <property type="entry name" value="LUXSPROTEIN"/>
</dbReference>
<dbReference type="SUPFAM" id="SSF63411">
    <property type="entry name" value="LuxS/MPP-like metallohydrolase"/>
    <property type="match status" value="1"/>
</dbReference>
<proteinExistence type="inferred from homology"/>